<sequence length="151" mass="16439">MQVILLEKVSNLGNLGEVVRVRDGYARNFLIPQKKARRATDAALKEFEARRVELEKIQAEKLAAAQALGERLNGYQLKVAQKAGVDGRLFGSVTNADIAEGLRTAGFEGVEKSQVRLPNGQLKTVGEFPIQVGLHADVLVDVTVLVEGEMN</sequence>
<evidence type="ECO:0000255" key="1">
    <source>
        <dbReference type="HAMAP-Rule" id="MF_00503"/>
    </source>
</evidence>
<evidence type="ECO:0000305" key="2"/>
<feature type="chain" id="PRO_0000236489" description="Large ribosomal subunit protein bL9">
    <location>
        <begin position="1"/>
        <end position="151"/>
    </location>
</feature>
<dbReference type="EMBL" id="AM167904">
    <property type="protein sequence ID" value="CAJ49781.1"/>
    <property type="molecule type" value="Genomic_DNA"/>
</dbReference>
<dbReference type="RefSeq" id="WP_012417834.1">
    <property type="nucleotide sequence ID" value="NC_010645.1"/>
</dbReference>
<dbReference type="SMR" id="Q2KZ23"/>
<dbReference type="STRING" id="360910.BAV2172"/>
<dbReference type="GeneID" id="92934767"/>
<dbReference type="KEGG" id="bav:BAV2172"/>
<dbReference type="eggNOG" id="COG0359">
    <property type="taxonomic scope" value="Bacteria"/>
</dbReference>
<dbReference type="HOGENOM" id="CLU_078938_4_1_4"/>
<dbReference type="OrthoDB" id="9788336at2"/>
<dbReference type="Proteomes" id="UP000001977">
    <property type="component" value="Chromosome"/>
</dbReference>
<dbReference type="GO" id="GO:1990904">
    <property type="term" value="C:ribonucleoprotein complex"/>
    <property type="evidence" value="ECO:0007669"/>
    <property type="project" value="UniProtKB-KW"/>
</dbReference>
<dbReference type="GO" id="GO:0005840">
    <property type="term" value="C:ribosome"/>
    <property type="evidence" value="ECO:0007669"/>
    <property type="project" value="UniProtKB-KW"/>
</dbReference>
<dbReference type="GO" id="GO:0019843">
    <property type="term" value="F:rRNA binding"/>
    <property type="evidence" value="ECO:0007669"/>
    <property type="project" value="UniProtKB-UniRule"/>
</dbReference>
<dbReference type="GO" id="GO:0003735">
    <property type="term" value="F:structural constituent of ribosome"/>
    <property type="evidence" value="ECO:0007669"/>
    <property type="project" value="InterPro"/>
</dbReference>
<dbReference type="GO" id="GO:0006412">
    <property type="term" value="P:translation"/>
    <property type="evidence" value="ECO:0007669"/>
    <property type="project" value="UniProtKB-UniRule"/>
</dbReference>
<dbReference type="Gene3D" id="3.10.430.100">
    <property type="entry name" value="Ribosomal protein L9, C-terminal domain"/>
    <property type="match status" value="1"/>
</dbReference>
<dbReference type="Gene3D" id="3.40.5.10">
    <property type="entry name" value="Ribosomal protein L9, N-terminal domain"/>
    <property type="match status" value="1"/>
</dbReference>
<dbReference type="HAMAP" id="MF_00503">
    <property type="entry name" value="Ribosomal_bL9"/>
    <property type="match status" value="1"/>
</dbReference>
<dbReference type="InterPro" id="IPR000244">
    <property type="entry name" value="Ribosomal_bL9"/>
</dbReference>
<dbReference type="InterPro" id="IPR009027">
    <property type="entry name" value="Ribosomal_bL9/RNase_H1_N"/>
</dbReference>
<dbReference type="InterPro" id="IPR020594">
    <property type="entry name" value="Ribosomal_bL9_bac/chp"/>
</dbReference>
<dbReference type="InterPro" id="IPR020069">
    <property type="entry name" value="Ribosomal_bL9_C"/>
</dbReference>
<dbReference type="InterPro" id="IPR036791">
    <property type="entry name" value="Ribosomal_bL9_C_sf"/>
</dbReference>
<dbReference type="InterPro" id="IPR020070">
    <property type="entry name" value="Ribosomal_bL9_N"/>
</dbReference>
<dbReference type="InterPro" id="IPR036935">
    <property type="entry name" value="Ribosomal_bL9_N_sf"/>
</dbReference>
<dbReference type="NCBIfam" id="TIGR00158">
    <property type="entry name" value="L9"/>
    <property type="match status" value="1"/>
</dbReference>
<dbReference type="PANTHER" id="PTHR21368">
    <property type="entry name" value="50S RIBOSOMAL PROTEIN L9"/>
    <property type="match status" value="1"/>
</dbReference>
<dbReference type="Pfam" id="PF03948">
    <property type="entry name" value="Ribosomal_L9_C"/>
    <property type="match status" value="1"/>
</dbReference>
<dbReference type="Pfam" id="PF01281">
    <property type="entry name" value="Ribosomal_L9_N"/>
    <property type="match status" value="1"/>
</dbReference>
<dbReference type="SUPFAM" id="SSF55658">
    <property type="entry name" value="L9 N-domain-like"/>
    <property type="match status" value="1"/>
</dbReference>
<dbReference type="SUPFAM" id="SSF55653">
    <property type="entry name" value="Ribosomal protein L9 C-domain"/>
    <property type="match status" value="1"/>
</dbReference>
<dbReference type="PROSITE" id="PS00651">
    <property type="entry name" value="RIBOSOMAL_L9"/>
    <property type="match status" value="1"/>
</dbReference>
<gene>
    <name evidence="1" type="primary">rplI</name>
    <name type="ordered locus">BAV2172</name>
</gene>
<comment type="function">
    <text evidence="1">Binds to the 23S rRNA.</text>
</comment>
<comment type="similarity">
    <text evidence="1">Belongs to the bacterial ribosomal protein bL9 family.</text>
</comment>
<proteinExistence type="inferred from homology"/>
<organism>
    <name type="scientific">Bordetella avium (strain 197N)</name>
    <dbReference type="NCBI Taxonomy" id="360910"/>
    <lineage>
        <taxon>Bacteria</taxon>
        <taxon>Pseudomonadati</taxon>
        <taxon>Pseudomonadota</taxon>
        <taxon>Betaproteobacteria</taxon>
        <taxon>Burkholderiales</taxon>
        <taxon>Alcaligenaceae</taxon>
        <taxon>Bordetella</taxon>
    </lineage>
</organism>
<name>RL9_BORA1</name>
<reference key="1">
    <citation type="journal article" date="2006" name="J. Bacteriol.">
        <title>Comparison of the genome sequence of the poultry pathogen Bordetella avium with those of B. bronchiseptica, B. pertussis, and B. parapertussis reveals extensive diversity in surface structures associated with host interaction.</title>
        <authorList>
            <person name="Sebaihia M."/>
            <person name="Preston A."/>
            <person name="Maskell D.J."/>
            <person name="Kuzmiak H."/>
            <person name="Connell T.D."/>
            <person name="King N.D."/>
            <person name="Orndorff P.E."/>
            <person name="Miyamoto D.M."/>
            <person name="Thomson N.R."/>
            <person name="Harris D."/>
            <person name="Goble A."/>
            <person name="Lord A."/>
            <person name="Murphy L."/>
            <person name="Quail M.A."/>
            <person name="Rutter S."/>
            <person name="Squares R."/>
            <person name="Squares S."/>
            <person name="Woodward J."/>
            <person name="Parkhill J."/>
            <person name="Temple L.M."/>
        </authorList>
    </citation>
    <scope>NUCLEOTIDE SEQUENCE [LARGE SCALE GENOMIC DNA]</scope>
    <source>
        <strain>197N</strain>
    </source>
</reference>
<accession>Q2KZ23</accession>
<keyword id="KW-1185">Reference proteome</keyword>
<keyword id="KW-0687">Ribonucleoprotein</keyword>
<keyword id="KW-0689">Ribosomal protein</keyword>
<keyword id="KW-0694">RNA-binding</keyword>
<keyword id="KW-0699">rRNA-binding</keyword>
<protein>
    <recommendedName>
        <fullName evidence="1">Large ribosomal subunit protein bL9</fullName>
    </recommendedName>
    <alternativeName>
        <fullName evidence="2">50S ribosomal protein L9</fullName>
    </alternativeName>
</protein>